<name>DAPF_RHIR8</name>
<protein>
    <recommendedName>
        <fullName evidence="1">Diaminopimelate epimerase</fullName>
        <shortName evidence="1">DAP epimerase</shortName>
        <ecNumber evidence="1">5.1.1.7</ecNumber>
    </recommendedName>
    <alternativeName>
        <fullName evidence="1">PLP-independent amino acid racemase</fullName>
    </alternativeName>
</protein>
<evidence type="ECO:0000255" key="1">
    <source>
        <dbReference type="HAMAP-Rule" id="MF_00197"/>
    </source>
</evidence>
<dbReference type="EC" id="5.1.1.7" evidence="1"/>
<dbReference type="EMBL" id="CP000628">
    <property type="protein sequence ID" value="ACM28124.1"/>
    <property type="molecule type" value="Genomic_DNA"/>
</dbReference>
<dbReference type="RefSeq" id="WP_012652711.1">
    <property type="nucleotide sequence ID" value="NC_011985.1"/>
</dbReference>
<dbReference type="SMR" id="B9JCL3"/>
<dbReference type="STRING" id="311403.Arad_4405"/>
<dbReference type="GeneID" id="86849989"/>
<dbReference type="KEGG" id="ara:Arad_4405"/>
<dbReference type="eggNOG" id="COG0253">
    <property type="taxonomic scope" value="Bacteria"/>
</dbReference>
<dbReference type="HOGENOM" id="CLU_053306_1_0_5"/>
<dbReference type="UniPathway" id="UPA00034">
    <property type="reaction ID" value="UER00025"/>
</dbReference>
<dbReference type="Proteomes" id="UP000001600">
    <property type="component" value="Chromosome 1"/>
</dbReference>
<dbReference type="GO" id="GO:0005829">
    <property type="term" value="C:cytosol"/>
    <property type="evidence" value="ECO:0007669"/>
    <property type="project" value="TreeGrafter"/>
</dbReference>
<dbReference type="GO" id="GO:0008837">
    <property type="term" value="F:diaminopimelate epimerase activity"/>
    <property type="evidence" value="ECO:0007669"/>
    <property type="project" value="UniProtKB-UniRule"/>
</dbReference>
<dbReference type="GO" id="GO:0009089">
    <property type="term" value="P:lysine biosynthetic process via diaminopimelate"/>
    <property type="evidence" value="ECO:0007669"/>
    <property type="project" value="UniProtKB-UniRule"/>
</dbReference>
<dbReference type="Gene3D" id="3.10.310.10">
    <property type="entry name" value="Diaminopimelate Epimerase, Chain A, domain 1"/>
    <property type="match status" value="2"/>
</dbReference>
<dbReference type="HAMAP" id="MF_00197">
    <property type="entry name" value="DAP_epimerase"/>
    <property type="match status" value="1"/>
</dbReference>
<dbReference type="InterPro" id="IPR018510">
    <property type="entry name" value="DAP_epimerase_AS"/>
</dbReference>
<dbReference type="InterPro" id="IPR001653">
    <property type="entry name" value="DAP_epimerase_DapF"/>
</dbReference>
<dbReference type="NCBIfam" id="TIGR00652">
    <property type="entry name" value="DapF"/>
    <property type="match status" value="1"/>
</dbReference>
<dbReference type="PANTHER" id="PTHR31689:SF0">
    <property type="entry name" value="DIAMINOPIMELATE EPIMERASE"/>
    <property type="match status" value="1"/>
</dbReference>
<dbReference type="PANTHER" id="PTHR31689">
    <property type="entry name" value="DIAMINOPIMELATE EPIMERASE, CHLOROPLASTIC"/>
    <property type="match status" value="1"/>
</dbReference>
<dbReference type="Pfam" id="PF01678">
    <property type="entry name" value="DAP_epimerase"/>
    <property type="match status" value="2"/>
</dbReference>
<dbReference type="SUPFAM" id="SSF54506">
    <property type="entry name" value="Diaminopimelate epimerase-like"/>
    <property type="match status" value="2"/>
</dbReference>
<dbReference type="PROSITE" id="PS01326">
    <property type="entry name" value="DAP_EPIMERASE"/>
    <property type="match status" value="1"/>
</dbReference>
<sequence length="301" mass="32398">MSNTVEFARMNGLGNKILVVDMRGRKDVVTAAAAIALNADPATEFDQIMAIHDPKAEGTDAWIDILNSDGTKAQACGNGTRCVVQALAAETGKKVFTFQTVAGILNAVEHEDGTISVDMGRPVFDWDKIPLAEEFADTRRIELQIGPIDNPVLHSPSVMSMGNPHAIFWVDKDPMSYDLARFGPLLENHPMFPERANITLAQVLSPTLLRTRTWERGAGLTLACGSAACSAAVSAARTGRTGRKVTIDVASAPASGQLTIEWRENDDHVVMTGPAEWEWSGVVDPVTGSFTRAQEQGAQAR</sequence>
<reference key="1">
    <citation type="journal article" date="2009" name="J. Bacteriol.">
        <title>Genome sequences of three Agrobacterium biovars help elucidate the evolution of multichromosome genomes in bacteria.</title>
        <authorList>
            <person name="Slater S.C."/>
            <person name="Goldman B.S."/>
            <person name="Goodner B."/>
            <person name="Setubal J.C."/>
            <person name="Farrand S.K."/>
            <person name="Nester E.W."/>
            <person name="Burr T.J."/>
            <person name="Banta L."/>
            <person name="Dickerman A.W."/>
            <person name="Paulsen I."/>
            <person name="Otten L."/>
            <person name="Suen G."/>
            <person name="Welch R."/>
            <person name="Almeida N.F."/>
            <person name="Arnold F."/>
            <person name="Burton O.T."/>
            <person name="Du Z."/>
            <person name="Ewing A."/>
            <person name="Godsy E."/>
            <person name="Heisel S."/>
            <person name="Houmiel K.L."/>
            <person name="Jhaveri J."/>
            <person name="Lu J."/>
            <person name="Miller N.M."/>
            <person name="Norton S."/>
            <person name="Chen Q."/>
            <person name="Phoolcharoen W."/>
            <person name="Ohlin V."/>
            <person name="Ondrusek D."/>
            <person name="Pride N."/>
            <person name="Stricklin S.L."/>
            <person name="Sun J."/>
            <person name="Wheeler C."/>
            <person name="Wilson L."/>
            <person name="Zhu H."/>
            <person name="Wood D.W."/>
        </authorList>
    </citation>
    <scope>NUCLEOTIDE SEQUENCE [LARGE SCALE GENOMIC DNA]</scope>
    <source>
        <strain>K84 / ATCC BAA-868</strain>
    </source>
</reference>
<gene>
    <name evidence="1" type="primary">dapF</name>
    <name type="ordered locus">Arad_4405</name>
</gene>
<accession>B9JCL3</accession>
<proteinExistence type="inferred from homology"/>
<keyword id="KW-0028">Amino-acid biosynthesis</keyword>
<keyword id="KW-0963">Cytoplasm</keyword>
<keyword id="KW-0413">Isomerase</keyword>
<keyword id="KW-0457">Lysine biosynthesis</keyword>
<organism>
    <name type="scientific">Rhizobium rhizogenes (strain K84 / ATCC BAA-868)</name>
    <name type="common">Agrobacterium radiobacter</name>
    <dbReference type="NCBI Taxonomy" id="311403"/>
    <lineage>
        <taxon>Bacteria</taxon>
        <taxon>Pseudomonadati</taxon>
        <taxon>Pseudomonadota</taxon>
        <taxon>Alphaproteobacteria</taxon>
        <taxon>Hyphomicrobiales</taxon>
        <taxon>Rhizobiaceae</taxon>
        <taxon>Rhizobium/Agrobacterium group</taxon>
        <taxon>Rhizobium</taxon>
    </lineage>
</organism>
<feature type="chain" id="PRO_1000124396" description="Diaminopimelate epimerase">
    <location>
        <begin position="1"/>
        <end position="301"/>
    </location>
</feature>
<feature type="active site" description="Proton donor" evidence="1">
    <location>
        <position position="76"/>
    </location>
</feature>
<feature type="active site" description="Proton acceptor" evidence="1">
    <location>
        <position position="224"/>
    </location>
</feature>
<feature type="binding site" evidence="1">
    <location>
        <position position="15"/>
    </location>
    <ligand>
        <name>substrate</name>
    </ligand>
</feature>
<feature type="binding site" evidence="1">
    <location>
        <position position="47"/>
    </location>
    <ligand>
        <name>substrate</name>
    </ligand>
</feature>
<feature type="binding site" evidence="1">
    <location>
        <position position="67"/>
    </location>
    <ligand>
        <name>substrate</name>
    </ligand>
</feature>
<feature type="binding site" evidence="1">
    <location>
        <begin position="77"/>
        <end position="78"/>
    </location>
    <ligand>
        <name>substrate</name>
    </ligand>
</feature>
<feature type="binding site" evidence="1">
    <location>
        <position position="163"/>
    </location>
    <ligand>
        <name>substrate</name>
    </ligand>
</feature>
<feature type="binding site" evidence="1">
    <location>
        <position position="197"/>
    </location>
    <ligand>
        <name>substrate</name>
    </ligand>
</feature>
<feature type="binding site" evidence="1">
    <location>
        <begin position="215"/>
        <end position="216"/>
    </location>
    <ligand>
        <name>substrate</name>
    </ligand>
</feature>
<feature type="binding site" evidence="1">
    <location>
        <begin position="225"/>
        <end position="226"/>
    </location>
    <ligand>
        <name>substrate</name>
    </ligand>
</feature>
<feature type="site" description="Could be important to modulate the pK values of the two catalytic cysteine residues" evidence="1">
    <location>
        <position position="165"/>
    </location>
</feature>
<feature type="site" description="Could be important to modulate the pK values of the two catalytic cysteine residues" evidence="1">
    <location>
        <position position="215"/>
    </location>
</feature>
<comment type="function">
    <text evidence="1">Catalyzes the stereoinversion of LL-2,6-diaminopimelate (L,L-DAP) to meso-diaminopimelate (meso-DAP), a precursor of L-lysine and an essential component of the bacterial peptidoglycan.</text>
</comment>
<comment type="catalytic activity">
    <reaction evidence="1">
        <text>(2S,6S)-2,6-diaminopimelate = meso-2,6-diaminopimelate</text>
        <dbReference type="Rhea" id="RHEA:15393"/>
        <dbReference type="ChEBI" id="CHEBI:57609"/>
        <dbReference type="ChEBI" id="CHEBI:57791"/>
        <dbReference type="EC" id="5.1.1.7"/>
    </reaction>
</comment>
<comment type="pathway">
    <text evidence="1">Amino-acid biosynthesis; L-lysine biosynthesis via DAP pathway; DL-2,6-diaminopimelate from LL-2,6-diaminopimelate: step 1/1.</text>
</comment>
<comment type="subunit">
    <text evidence="1">Homodimer.</text>
</comment>
<comment type="subcellular location">
    <subcellularLocation>
        <location evidence="1">Cytoplasm</location>
    </subcellularLocation>
</comment>
<comment type="similarity">
    <text evidence="1">Belongs to the diaminopimelate epimerase family.</text>
</comment>